<evidence type="ECO:0000255" key="1">
    <source>
        <dbReference type="HAMAP-Rule" id="MF_00456"/>
    </source>
</evidence>
<comment type="function">
    <text evidence="1">Catalyzes the transfer of a phosphate group to glutamate to form L-glutamate 5-phosphate.</text>
</comment>
<comment type="catalytic activity">
    <reaction evidence="1">
        <text>L-glutamate + ATP = L-glutamyl 5-phosphate + ADP</text>
        <dbReference type="Rhea" id="RHEA:14877"/>
        <dbReference type="ChEBI" id="CHEBI:29985"/>
        <dbReference type="ChEBI" id="CHEBI:30616"/>
        <dbReference type="ChEBI" id="CHEBI:58274"/>
        <dbReference type="ChEBI" id="CHEBI:456216"/>
        <dbReference type="EC" id="2.7.2.11"/>
    </reaction>
</comment>
<comment type="pathway">
    <text evidence="1">Amino-acid biosynthesis; L-proline biosynthesis; L-glutamate 5-semialdehyde from L-glutamate: step 1/2.</text>
</comment>
<comment type="subcellular location">
    <subcellularLocation>
        <location evidence="1">Cytoplasm</location>
    </subcellularLocation>
</comment>
<comment type="similarity">
    <text evidence="1">Belongs to the glutamate 5-kinase family.</text>
</comment>
<dbReference type="EC" id="2.7.2.11" evidence="1"/>
<dbReference type="EMBL" id="CP000100">
    <property type="protein sequence ID" value="ABB58227.1"/>
    <property type="molecule type" value="Genomic_DNA"/>
</dbReference>
<dbReference type="RefSeq" id="WP_011378361.1">
    <property type="nucleotide sequence ID" value="NZ_JACJTX010000001.1"/>
</dbReference>
<dbReference type="SMR" id="Q31L42"/>
<dbReference type="STRING" id="1140.Synpcc7942_2197"/>
<dbReference type="PaxDb" id="1140-Synpcc7942_2197"/>
<dbReference type="GeneID" id="72431079"/>
<dbReference type="KEGG" id="syf:Synpcc7942_2197"/>
<dbReference type="eggNOG" id="COG0263">
    <property type="taxonomic scope" value="Bacteria"/>
</dbReference>
<dbReference type="HOGENOM" id="CLU_025400_2_0_3"/>
<dbReference type="OrthoDB" id="9804434at2"/>
<dbReference type="BioCyc" id="SYNEL:SYNPCC7942_2197-MONOMER"/>
<dbReference type="UniPathway" id="UPA00098">
    <property type="reaction ID" value="UER00359"/>
</dbReference>
<dbReference type="Proteomes" id="UP000889800">
    <property type="component" value="Chromosome"/>
</dbReference>
<dbReference type="GO" id="GO:0005829">
    <property type="term" value="C:cytosol"/>
    <property type="evidence" value="ECO:0007669"/>
    <property type="project" value="TreeGrafter"/>
</dbReference>
<dbReference type="GO" id="GO:0005524">
    <property type="term" value="F:ATP binding"/>
    <property type="evidence" value="ECO:0007669"/>
    <property type="project" value="UniProtKB-KW"/>
</dbReference>
<dbReference type="GO" id="GO:0004349">
    <property type="term" value="F:glutamate 5-kinase activity"/>
    <property type="evidence" value="ECO:0007669"/>
    <property type="project" value="UniProtKB-UniRule"/>
</dbReference>
<dbReference type="GO" id="GO:0003723">
    <property type="term" value="F:RNA binding"/>
    <property type="evidence" value="ECO:0007669"/>
    <property type="project" value="InterPro"/>
</dbReference>
<dbReference type="GO" id="GO:0055129">
    <property type="term" value="P:L-proline biosynthetic process"/>
    <property type="evidence" value="ECO:0007669"/>
    <property type="project" value="UniProtKB-UniRule"/>
</dbReference>
<dbReference type="CDD" id="cd04242">
    <property type="entry name" value="AAK_G5K_ProB"/>
    <property type="match status" value="1"/>
</dbReference>
<dbReference type="CDD" id="cd21157">
    <property type="entry name" value="PUA_G5K"/>
    <property type="match status" value="1"/>
</dbReference>
<dbReference type="FunFam" id="2.30.130.10:FF:000007">
    <property type="entry name" value="Glutamate 5-kinase"/>
    <property type="match status" value="1"/>
</dbReference>
<dbReference type="FunFam" id="3.40.1160.10:FF:000018">
    <property type="entry name" value="Glutamate 5-kinase"/>
    <property type="match status" value="1"/>
</dbReference>
<dbReference type="Gene3D" id="3.40.1160.10">
    <property type="entry name" value="Acetylglutamate kinase-like"/>
    <property type="match status" value="1"/>
</dbReference>
<dbReference type="Gene3D" id="2.30.130.10">
    <property type="entry name" value="PUA domain"/>
    <property type="match status" value="1"/>
</dbReference>
<dbReference type="HAMAP" id="MF_00456">
    <property type="entry name" value="ProB"/>
    <property type="match status" value="1"/>
</dbReference>
<dbReference type="InterPro" id="IPR036393">
    <property type="entry name" value="AceGlu_kinase-like_sf"/>
</dbReference>
<dbReference type="InterPro" id="IPR001048">
    <property type="entry name" value="Asp/Glu/Uridylate_kinase"/>
</dbReference>
<dbReference type="InterPro" id="IPR041739">
    <property type="entry name" value="G5K_ProB"/>
</dbReference>
<dbReference type="InterPro" id="IPR001057">
    <property type="entry name" value="Glu/AcGlu_kinase"/>
</dbReference>
<dbReference type="InterPro" id="IPR011529">
    <property type="entry name" value="Glu_5kinase"/>
</dbReference>
<dbReference type="InterPro" id="IPR005715">
    <property type="entry name" value="Glu_5kinase/COase_Synthase"/>
</dbReference>
<dbReference type="InterPro" id="IPR019797">
    <property type="entry name" value="Glutamate_5-kinase_CS"/>
</dbReference>
<dbReference type="InterPro" id="IPR002478">
    <property type="entry name" value="PUA"/>
</dbReference>
<dbReference type="InterPro" id="IPR015947">
    <property type="entry name" value="PUA-like_sf"/>
</dbReference>
<dbReference type="InterPro" id="IPR036974">
    <property type="entry name" value="PUA_sf"/>
</dbReference>
<dbReference type="NCBIfam" id="TIGR01027">
    <property type="entry name" value="proB"/>
    <property type="match status" value="1"/>
</dbReference>
<dbReference type="PANTHER" id="PTHR43654">
    <property type="entry name" value="GLUTAMATE 5-KINASE"/>
    <property type="match status" value="1"/>
</dbReference>
<dbReference type="PANTHER" id="PTHR43654:SF3">
    <property type="entry name" value="GLUTAMATE 5-KINASE"/>
    <property type="match status" value="1"/>
</dbReference>
<dbReference type="Pfam" id="PF00696">
    <property type="entry name" value="AA_kinase"/>
    <property type="match status" value="1"/>
</dbReference>
<dbReference type="Pfam" id="PF01472">
    <property type="entry name" value="PUA"/>
    <property type="match status" value="1"/>
</dbReference>
<dbReference type="PIRSF" id="PIRSF000729">
    <property type="entry name" value="GK"/>
    <property type="match status" value="1"/>
</dbReference>
<dbReference type="PRINTS" id="PR00474">
    <property type="entry name" value="GLU5KINASE"/>
</dbReference>
<dbReference type="SMART" id="SM00359">
    <property type="entry name" value="PUA"/>
    <property type="match status" value="1"/>
</dbReference>
<dbReference type="SUPFAM" id="SSF53633">
    <property type="entry name" value="Carbamate kinase-like"/>
    <property type="match status" value="1"/>
</dbReference>
<dbReference type="SUPFAM" id="SSF88697">
    <property type="entry name" value="PUA domain-like"/>
    <property type="match status" value="1"/>
</dbReference>
<dbReference type="PROSITE" id="PS00902">
    <property type="entry name" value="GLUTAMATE_5_KINASE"/>
    <property type="match status" value="1"/>
</dbReference>
<dbReference type="PROSITE" id="PS50890">
    <property type="entry name" value="PUA"/>
    <property type="match status" value="1"/>
</dbReference>
<keyword id="KW-0028">Amino-acid biosynthesis</keyword>
<keyword id="KW-0067">ATP-binding</keyword>
<keyword id="KW-0963">Cytoplasm</keyword>
<keyword id="KW-0418">Kinase</keyword>
<keyword id="KW-0547">Nucleotide-binding</keyword>
<keyword id="KW-0641">Proline biosynthesis</keyword>
<keyword id="KW-1185">Reference proteome</keyword>
<keyword id="KW-0808">Transferase</keyword>
<protein>
    <recommendedName>
        <fullName evidence="1">Glutamate 5-kinase</fullName>
        <ecNumber evidence="1">2.7.2.11</ecNumber>
    </recommendedName>
    <alternativeName>
        <fullName evidence="1">Gamma-glutamyl kinase</fullName>
        <shortName evidence="1">GK</shortName>
    </alternativeName>
</protein>
<gene>
    <name evidence="1" type="primary">proB</name>
    <name type="ordered locus">Synpcc7942_2197</name>
</gene>
<sequence>MSETLVVKIGTSSLTNPHHPGLALSTIAGLVEVICQLRRQGYNVVLVSSGAVGVGCTRLGLRDRPSRIAQRQAIAAVGQGRLMRTYDDLFTTLGQPIAQVLLTRGDLAQRQRYINAYQTFQELFELGVVPIVNENDTVAVEELKFGDNDTLSALVASLVEAQWLFLLTDVDRLYTADPRQDPNAKPITIVHDLSELESIQAGGQGSRWGTGGMATKLTAAKIATQASVRTVITQGRSPENLLKILAGEAIGTWFEPQPETVNARKRWIAHGLVPTGKLLLDAGAVQAIQAGGKSLLAAGIQAIEGDFEAQDAVQLCDLNGTEIARGLVNYDSHELQQIRGCQSDQIVQILGYEGAETIVHRDNLVLS</sequence>
<organism>
    <name type="scientific">Synechococcus elongatus (strain ATCC 33912 / PCC 7942 / FACHB-805)</name>
    <name type="common">Anacystis nidulans R2</name>
    <dbReference type="NCBI Taxonomy" id="1140"/>
    <lineage>
        <taxon>Bacteria</taxon>
        <taxon>Bacillati</taxon>
        <taxon>Cyanobacteriota</taxon>
        <taxon>Cyanophyceae</taxon>
        <taxon>Synechococcales</taxon>
        <taxon>Synechococcaceae</taxon>
        <taxon>Synechococcus</taxon>
    </lineage>
</organism>
<name>PROB_SYNE7</name>
<feature type="chain" id="PRO_0000253012" description="Glutamate 5-kinase">
    <location>
        <begin position="1"/>
        <end position="367"/>
    </location>
</feature>
<feature type="domain" description="PUA" evidence="1">
    <location>
        <begin position="275"/>
        <end position="353"/>
    </location>
</feature>
<feature type="binding site" evidence="1">
    <location>
        <position position="8"/>
    </location>
    <ligand>
        <name>ATP</name>
        <dbReference type="ChEBI" id="CHEBI:30616"/>
    </ligand>
</feature>
<feature type="binding site" evidence="1">
    <location>
        <position position="49"/>
    </location>
    <ligand>
        <name>substrate</name>
    </ligand>
</feature>
<feature type="binding site" evidence="1">
    <location>
        <position position="136"/>
    </location>
    <ligand>
        <name>substrate</name>
    </ligand>
</feature>
<feature type="binding site" evidence="1">
    <location>
        <position position="148"/>
    </location>
    <ligand>
        <name>substrate</name>
    </ligand>
</feature>
<feature type="binding site" evidence="1">
    <location>
        <begin position="168"/>
        <end position="169"/>
    </location>
    <ligand>
        <name>ATP</name>
        <dbReference type="ChEBI" id="CHEBI:30616"/>
    </ligand>
</feature>
<feature type="binding site" evidence="1">
    <location>
        <begin position="210"/>
        <end position="216"/>
    </location>
    <ligand>
        <name>ATP</name>
        <dbReference type="ChEBI" id="CHEBI:30616"/>
    </ligand>
</feature>
<reference key="1">
    <citation type="submission" date="2005-08" db="EMBL/GenBank/DDBJ databases">
        <title>Complete sequence of chromosome 1 of Synechococcus elongatus PCC 7942.</title>
        <authorList>
            <consortium name="US DOE Joint Genome Institute"/>
            <person name="Copeland A."/>
            <person name="Lucas S."/>
            <person name="Lapidus A."/>
            <person name="Barry K."/>
            <person name="Detter J.C."/>
            <person name="Glavina T."/>
            <person name="Hammon N."/>
            <person name="Israni S."/>
            <person name="Pitluck S."/>
            <person name="Schmutz J."/>
            <person name="Larimer F."/>
            <person name="Land M."/>
            <person name="Kyrpides N."/>
            <person name="Lykidis A."/>
            <person name="Golden S."/>
            <person name="Richardson P."/>
        </authorList>
    </citation>
    <scope>NUCLEOTIDE SEQUENCE [LARGE SCALE GENOMIC DNA]</scope>
    <source>
        <strain>ATCC 33912 / PCC 7942 / FACHB-805</strain>
    </source>
</reference>
<proteinExistence type="inferred from homology"/>
<accession>Q31L42</accession>